<gene>
    <name evidence="1" type="primary">atpA2</name>
    <name type="ordered locus">Sfri_4047</name>
</gene>
<proteinExistence type="inferred from homology"/>
<sequence>MQLNSTEISDLIKQRIQQFDVVSEARNEGTIVAVSDGIIRINGLADVMQGEMIELPGGCFAIALNLERDSVGAVVMGPYANLAEGDKVRTTGRILEVPVGRGLLGRVVNTLGEPIDGKGPIDNDGFSPVEVIAPGVIERKSVSQPIQTGYKAVDAMIPIGRGQRELIIGDRQTGKTAMAIDAIINQKESGIKCVYVAIGQKASTIANVVRKLEEHGALANTIVVVASASEAAALQYLAPYSGCSMGEYFRDRGEDSLIVYDDLSKQAVAYRQISLLLKRPPGREAYPGDVFYLHSRLLERASRVNVNYVEKFTKGAVTGQTGSLTALPIIETQAGDVSAFVPTNVISITDGQIFLETDLFNSGLRPAVNPGISVSRVGGAAQTKIIKKLSGGIRTALAQYRELAAFSQFASDLDDATRAQLEHGERVTELMKQKQYAPMSVAAQSVSIFAAEKGYLKGVALNEIGRFEASLLSYMNSQHTDLMNTINATGDYNADIEGELKAGMDKFIETQTW</sequence>
<feature type="chain" id="PRO_0000339058" description="ATP synthase subunit alpha 2">
    <location>
        <begin position="1"/>
        <end position="513"/>
    </location>
</feature>
<feature type="binding site" evidence="1">
    <location>
        <begin position="169"/>
        <end position="176"/>
    </location>
    <ligand>
        <name>ATP</name>
        <dbReference type="ChEBI" id="CHEBI:30616"/>
    </ligand>
</feature>
<feature type="site" description="Required for activity" evidence="1">
    <location>
        <position position="373"/>
    </location>
</feature>
<evidence type="ECO:0000255" key="1">
    <source>
        <dbReference type="HAMAP-Rule" id="MF_01346"/>
    </source>
</evidence>
<reference key="1">
    <citation type="submission" date="2006-08" db="EMBL/GenBank/DDBJ databases">
        <title>Complete sequence of Shewanella frigidimarina NCIMB 400.</title>
        <authorList>
            <consortium name="US DOE Joint Genome Institute"/>
            <person name="Copeland A."/>
            <person name="Lucas S."/>
            <person name="Lapidus A."/>
            <person name="Barry K."/>
            <person name="Detter J.C."/>
            <person name="Glavina del Rio T."/>
            <person name="Hammon N."/>
            <person name="Israni S."/>
            <person name="Dalin E."/>
            <person name="Tice H."/>
            <person name="Pitluck S."/>
            <person name="Fredrickson J.K."/>
            <person name="Kolker E."/>
            <person name="McCuel L.A."/>
            <person name="DiChristina T."/>
            <person name="Nealson K.H."/>
            <person name="Newman D."/>
            <person name="Tiedje J.M."/>
            <person name="Zhou J."/>
            <person name="Romine M.F."/>
            <person name="Culley D.E."/>
            <person name="Serres M."/>
            <person name="Chertkov O."/>
            <person name="Brettin T."/>
            <person name="Bruce D."/>
            <person name="Han C."/>
            <person name="Tapia R."/>
            <person name="Gilna P."/>
            <person name="Schmutz J."/>
            <person name="Larimer F."/>
            <person name="Land M."/>
            <person name="Hauser L."/>
            <person name="Kyrpides N."/>
            <person name="Mikhailova N."/>
            <person name="Richardson P."/>
        </authorList>
    </citation>
    <scope>NUCLEOTIDE SEQUENCE [LARGE SCALE GENOMIC DNA]</scope>
    <source>
        <strain>NCIMB 400</strain>
    </source>
</reference>
<accession>Q07VU2</accession>
<comment type="function">
    <text evidence="1">Produces ATP from ADP in the presence of a proton gradient across the membrane. The alpha chain is a regulatory subunit.</text>
</comment>
<comment type="catalytic activity">
    <reaction evidence="1">
        <text>ATP + H2O + 4 H(+)(in) = ADP + phosphate + 5 H(+)(out)</text>
        <dbReference type="Rhea" id="RHEA:57720"/>
        <dbReference type="ChEBI" id="CHEBI:15377"/>
        <dbReference type="ChEBI" id="CHEBI:15378"/>
        <dbReference type="ChEBI" id="CHEBI:30616"/>
        <dbReference type="ChEBI" id="CHEBI:43474"/>
        <dbReference type="ChEBI" id="CHEBI:456216"/>
        <dbReference type="EC" id="7.1.2.2"/>
    </reaction>
</comment>
<comment type="subunit">
    <text evidence="1">F-type ATPases have 2 components, CF(1) - the catalytic core - and CF(0) - the membrane proton channel. CF(1) has five subunits: alpha(3), beta(3), gamma(1), delta(1), epsilon(1). CF(0) has three main subunits: a(1), b(2) and c(9-12). The alpha and beta chains form an alternating ring which encloses part of the gamma chain. CF(1) is attached to CF(0) by a central stalk formed by the gamma and epsilon chains, while a peripheral stalk is formed by the delta and b chains.</text>
</comment>
<comment type="subcellular location">
    <subcellularLocation>
        <location evidence="1">Cell inner membrane</location>
        <topology evidence="1">Peripheral membrane protein</topology>
    </subcellularLocation>
</comment>
<comment type="similarity">
    <text evidence="1">Belongs to the ATPase alpha/beta chains family.</text>
</comment>
<keyword id="KW-0066">ATP synthesis</keyword>
<keyword id="KW-0067">ATP-binding</keyword>
<keyword id="KW-0997">Cell inner membrane</keyword>
<keyword id="KW-1003">Cell membrane</keyword>
<keyword id="KW-0139">CF(1)</keyword>
<keyword id="KW-0375">Hydrogen ion transport</keyword>
<keyword id="KW-0406">Ion transport</keyword>
<keyword id="KW-0472">Membrane</keyword>
<keyword id="KW-0547">Nucleotide-binding</keyword>
<keyword id="KW-1185">Reference proteome</keyword>
<keyword id="KW-1278">Translocase</keyword>
<keyword id="KW-0813">Transport</keyword>
<name>ATPA2_SHEFN</name>
<organism>
    <name type="scientific">Shewanella frigidimarina (strain NCIMB 400)</name>
    <dbReference type="NCBI Taxonomy" id="318167"/>
    <lineage>
        <taxon>Bacteria</taxon>
        <taxon>Pseudomonadati</taxon>
        <taxon>Pseudomonadota</taxon>
        <taxon>Gammaproteobacteria</taxon>
        <taxon>Alteromonadales</taxon>
        <taxon>Shewanellaceae</taxon>
        <taxon>Shewanella</taxon>
    </lineage>
</organism>
<dbReference type="EC" id="7.1.2.2" evidence="1"/>
<dbReference type="EMBL" id="CP000447">
    <property type="protein sequence ID" value="ABI73872.1"/>
    <property type="molecule type" value="Genomic_DNA"/>
</dbReference>
<dbReference type="SMR" id="Q07VU2"/>
<dbReference type="STRING" id="318167.Sfri_4047"/>
<dbReference type="KEGG" id="sfr:Sfri_4047"/>
<dbReference type="eggNOG" id="COG0056">
    <property type="taxonomic scope" value="Bacteria"/>
</dbReference>
<dbReference type="HOGENOM" id="CLU_010091_2_1_6"/>
<dbReference type="OrthoDB" id="9803053at2"/>
<dbReference type="Proteomes" id="UP000000684">
    <property type="component" value="Chromosome"/>
</dbReference>
<dbReference type="GO" id="GO:0005886">
    <property type="term" value="C:plasma membrane"/>
    <property type="evidence" value="ECO:0007669"/>
    <property type="project" value="UniProtKB-SubCell"/>
</dbReference>
<dbReference type="GO" id="GO:0045259">
    <property type="term" value="C:proton-transporting ATP synthase complex"/>
    <property type="evidence" value="ECO:0007669"/>
    <property type="project" value="UniProtKB-KW"/>
</dbReference>
<dbReference type="GO" id="GO:0043531">
    <property type="term" value="F:ADP binding"/>
    <property type="evidence" value="ECO:0007669"/>
    <property type="project" value="TreeGrafter"/>
</dbReference>
<dbReference type="GO" id="GO:0005524">
    <property type="term" value="F:ATP binding"/>
    <property type="evidence" value="ECO:0007669"/>
    <property type="project" value="UniProtKB-UniRule"/>
</dbReference>
<dbReference type="GO" id="GO:0046933">
    <property type="term" value="F:proton-transporting ATP synthase activity, rotational mechanism"/>
    <property type="evidence" value="ECO:0007669"/>
    <property type="project" value="UniProtKB-UniRule"/>
</dbReference>
<dbReference type="CDD" id="cd18113">
    <property type="entry name" value="ATP-synt_F1_alpha_C"/>
    <property type="match status" value="1"/>
</dbReference>
<dbReference type="CDD" id="cd18116">
    <property type="entry name" value="ATP-synt_F1_alpha_N"/>
    <property type="match status" value="1"/>
</dbReference>
<dbReference type="CDD" id="cd01132">
    <property type="entry name" value="F1-ATPase_alpha_CD"/>
    <property type="match status" value="1"/>
</dbReference>
<dbReference type="FunFam" id="1.20.150.20:FF:000001">
    <property type="entry name" value="ATP synthase subunit alpha"/>
    <property type="match status" value="1"/>
</dbReference>
<dbReference type="FunFam" id="2.40.30.20:FF:000001">
    <property type="entry name" value="ATP synthase subunit alpha"/>
    <property type="match status" value="1"/>
</dbReference>
<dbReference type="FunFam" id="3.40.50.300:FF:000002">
    <property type="entry name" value="ATP synthase subunit alpha"/>
    <property type="match status" value="1"/>
</dbReference>
<dbReference type="Gene3D" id="2.40.30.20">
    <property type="match status" value="1"/>
</dbReference>
<dbReference type="Gene3D" id="1.20.150.20">
    <property type="entry name" value="ATP synthase alpha/beta chain, C-terminal domain"/>
    <property type="match status" value="1"/>
</dbReference>
<dbReference type="Gene3D" id="3.40.50.300">
    <property type="entry name" value="P-loop containing nucleotide triphosphate hydrolases"/>
    <property type="match status" value="1"/>
</dbReference>
<dbReference type="HAMAP" id="MF_01346">
    <property type="entry name" value="ATP_synth_alpha_bact"/>
    <property type="match status" value="1"/>
</dbReference>
<dbReference type="InterPro" id="IPR023366">
    <property type="entry name" value="ATP_synth_asu-like_sf"/>
</dbReference>
<dbReference type="InterPro" id="IPR000793">
    <property type="entry name" value="ATP_synth_asu_C"/>
</dbReference>
<dbReference type="InterPro" id="IPR038376">
    <property type="entry name" value="ATP_synth_asu_C_sf"/>
</dbReference>
<dbReference type="InterPro" id="IPR033732">
    <property type="entry name" value="ATP_synth_F1_a_nt-bd_dom"/>
</dbReference>
<dbReference type="InterPro" id="IPR005294">
    <property type="entry name" value="ATP_synth_F1_asu"/>
</dbReference>
<dbReference type="InterPro" id="IPR020003">
    <property type="entry name" value="ATPase_a/bsu_AS"/>
</dbReference>
<dbReference type="InterPro" id="IPR004100">
    <property type="entry name" value="ATPase_F1/V1/A1_a/bsu_N"/>
</dbReference>
<dbReference type="InterPro" id="IPR036121">
    <property type="entry name" value="ATPase_F1/V1/A1_a/bsu_N_sf"/>
</dbReference>
<dbReference type="InterPro" id="IPR000194">
    <property type="entry name" value="ATPase_F1/V1/A1_a/bsu_nucl-bd"/>
</dbReference>
<dbReference type="InterPro" id="IPR027417">
    <property type="entry name" value="P-loop_NTPase"/>
</dbReference>
<dbReference type="NCBIfam" id="TIGR00962">
    <property type="entry name" value="atpA"/>
    <property type="match status" value="1"/>
</dbReference>
<dbReference type="NCBIfam" id="NF009884">
    <property type="entry name" value="PRK13343.1"/>
    <property type="match status" value="1"/>
</dbReference>
<dbReference type="PANTHER" id="PTHR48082">
    <property type="entry name" value="ATP SYNTHASE SUBUNIT ALPHA, MITOCHONDRIAL"/>
    <property type="match status" value="1"/>
</dbReference>
<dbReference type="PANTHER" id="PTHR48082:SF2">
    <property type="entry name" value="ATP SYNTHASE SUBUNIT ALPHA, MITOCHONDRIAL"/>
    <property type="match status" value="1"/>
</dbReference>
<dbReference type="Pfam" id="PF00006">
    <property type="entry name" value="ATP-synt_ab"/>
    <property type="match status" value="1"/>
</dbReference>
<dbReference type="Pfam" id="PF00306">
    <property type="entry name" value="ATP-synt_ab_C"/>
    <property type="match status" value="1"/>
</dbReference>
<dbReference type="Pfam" id="PF02874">
    <property type="entry name" value="ATP-synt_ab_N"/>
    <property type="match status" value="1"/>
</dbReference>
<dbReference type="SUPFAM" id="SSF47917">
    <property type="entry name" value="C-terminal domain of alpha and beta subunits of F1 ATP synthase"/>
    <property type="match status" value="1"/>
</dbReference>
<dbReference type="SUPFAM" id="SSF50615">
    <property type="entry name" value="N-terminal domain of alpha and beta subunits of F1 ATP synthase"/>
    <property type="match status" value="1"/>
</dbReference>
<dbReference type="SUPFAM" id="SSF52540">
    <property type="entry name" value="P-loop containing nucleoside triphosphate hydrolases"/>
    <property type="match status" value="1"/>
</dbReference>
<dbReference type="PROSITE" id="PS00152">
    <property type="entry name" value="ATPASE_ALPHA_BETA"/>
    <property type="match status" value="1"/>
</dbReference>
<protein>
    <recommendedName>
        <fullName evidence="1">ATP synthase subunit alpha 2</fullName>
        <ecNumber evidence="1">7.1.2.2</ecNumber>
    </recommendedName>
    <alternativeName>
        <fullName evidence="1">ATP synthase F1 sector subunit alpha 2</fullName>
    </alternativeName>
    <alternativeName>
        <fullName evidence="1">F-ATPase subunit alpha 2</fullName>
    </alternativeName>
</protein>